<gene>
    <name type="primary">Rtc1</name>
    <name type="synonym">RCL1</name>
    <name type="synonym">RTC2</name>
    <name type="ORF">CG11130</name>
</gene>
<keyword id="KW-0539">Nucleus</keyword>
<keyword id="KW-1185">Reference proteome</keyword>
<keyword id="KW-0690">Ribosome biogenesis</keyword>
<organism>
    <name type="scientific">Drosophila melanogaster</name>
    <name type="common">Fruit fly</name>
    <dbReference type="NCBI Taxonomy" id="7227"/>
    <lineage>
        <taxon>Eukaryota</taxon>
        <taxon>Metazoa</taxon>
        <taxon>Ecdysozoa</taxon>
        <taxon>Arthropoda</taxon>
        <taxon>Hexapoda</taxon>
        <taxon>Insecta</taxon>
        <taxon>Pterygota</taxon>
        <taxon>Neoptera</taxon>
        <taxon>Endopterygota</taxon>
        <taxon>Diptera</taxon>
        <taxon>Brachycera</taxon>
        <taxon>Muscomorpha</taxon>
        <taxon>Ephydroidea</taxon>
        <taxon>Drosophilidae</taxon>
        <taxon>Drosophila</taxon>
        <taxon>Sophophora</taxon>
    </lineage>
</organism>
<feature type="chain" id="PRO_0000156440" description="Probable RNA 3'-terminal phosphate cyclase-like protein">
    <location>
        <begin position="1"/>
        <end position="384"/>
    </location>
</feature>
<feature type="sequence conflict" description="In Ref. 5; M15898." evidence="3" ref="5">
    <original>PLGG</original>
    <variation>SAGR</variation>
    <location>
        <begin position="165"/>
        <end position="168"/>
    </location>
</feature>
<protein>
    <recommendedName>
        <fullName>Probable RNA 3'-terminal phosphate cyclase-like protein</fullName>
    </recommendedName>
</protein>
<comment type="function">
    <text evidence="1 2">Part of the small subunit (SSU) processome, first precursor of the small eukaryotic ribosomal subunit. During the assembly of the SSU processome in the nucleolus, many ribosome biogenesis factors, an RNA chaperone and ribosomal proteins associate with the nascent pre-rRNA and work in concert to generate RNA folding, modifications, rearrangements and cleavage as well as targeted degradation of pre-ribosomal RNA by the RNA exosome (By similarity). Does not have cyclase activity (By similarity).</text>
</comment>
<comment type="subunit">
    <text evidence="2">Part of the small subunit (SSU) processome, composed of more than 70 proteins and the RNA chaperone small nucleolar RNA (snoRNA) U3.</text>
</comment>
<comment type="subcellular location">
    <subcellularLocation>
        <location evidence="2">Nucleus</location>
        <location evidence="2">Nucleolus</location>
    </subcellularLocation>
</comment>
<comment type="similarity">
    <text evidence="3">Belongs to the RNA 3'-terminal cyclase family. Type 2 subfamily.</text>
</comment>
<dbReference type="EMBL" id="AE014298">
    <property type="protein sequence ID" value="AAF48313.2"/>
    <property type="molecule type" value="Genomic_DNA"/>
</dbReference>
<dbReference type="EMBL" id="AY058762">
    <property type="protein sequence ID" value="AAL13991.1"/>
    <property type="molecule type" value="mRNA"/>
</dbReference>
<dbReference type="EMBL" id="X04754">
    <property type="protein sequence ID" value="CAB55765.1"/>
    <property type="molecule type" value="Genomic_DNA"/>
</dbReference>
<dbReference type="EMBL" id="M15898">
    <property type="status" value="NOT_ANNOTATED_CDS"/>
    <property type="molecule type" value="Genomic_DNA"/>
</dbReference>
<dbReference type="RefSeq" id="NP_572919.1">
    <property type="nucleotide sequence ID" value="NM_132691.4"/>
</dbReference>
<dbReference type="SMR" id="P56175"/>
<dbReference type="BioGRID" id="58711">
    <property type="interactions" value="4"/>
</dbReference>
<dbReference type="FunCoup" id="P56175">
    <property type="interactions" value="1410"/>
</dbReference>
<dbReference type="IntAct" id="P56175">
    <property type="interactions" value="2"/>
</dbReference>
<dbReference type="STRING" id="7227.FBpp0073651"/>
<dbReference type="PaxDb" id="7227-FBpp0073651"/>
<dbReference type="DNASU" id="32338"/>
<dbReference type="EnsemblMetazoa" id="FBtr0073820">
    <property type="protein sequence ID" value="FBpp0073651"/>
    <property type="gene ID" value="FBgn0020909"/>
</dbReference>
<dbReference type="GeneID" id="32338"/>
<dbReference type="KEGG" id="dme:Dmel_CG11130"/>
<dbReference type="UCSC" id="CG11130-RA">
    <property type="organism name" value="d. melanogaster"/>
</dbReference>
<dbReference type="AGR" id="FB:FBgn0020909"/>
<dbReference type="CTD" id="32338"/>
<dbReference type="FlyBase" id="FBgn0020909">
    <property type="gene designation" value="Rtc1"/>
</dbReference>
<dbReference type="VEuPathDB" id="VectorBase:FBgn0020909"/>
<dbReference type="eggNOG" id="KOG3980">
    <property type="taxonomic scope" value="Eukaryota"/>
</dbReference>
<dbReference type="GeneTree" id="ENSGT00530000063404"/>
<dbReference type="HOGENOM" id="CLU_027882_1_0_1"/>
<dbReference type="InParanoid" id="P56175"/>
<dbReference type="OMA" id="YTDQNKG"/>
<dbReference type="OrthoDB" id="1911237at2759"/>
<dbReference type="PhylomeDB" id="P56175"/>
<dbReference type="Reactome" id="R-DME-6791226">
    <property type="pathway name" value="Major pathway of rRNA processing in the nucleolus and cytosol"/>
</dbReference>
<dbReference type="BioGRID-ORCS" id="32338">
    <property type="hits" value="1 hit in 1 CRISPR screen"/>
</dbReference>
<dbReference type="GenomeRNAi" id="32338"/>
<dbReference type="PRO" id="PR:P56175"/>
<dbReference type="Proteomes" id="UP000000803">
    <property type="component" value="Chromosome X"/>
</dbReference>
<dbReference type="Bgee" id="FBgn0020909">
    <property type="expression patterns" value="Expressed in secondary oocyte and 36 other cell types or tissues"/>
</dbReference>
<dbReference type="GO" id="GO:0005730">
    <property type="term" value="C:nucleolus"/>
    <property type="evidence" value="ECO:0007669"/>
    <property type="project" value="UniProtKB-SubCell"/>
</dbReference>
<dbReference type="GO" id="GO:0032040">
    <property type="term" value="C:small-subunit processome"/>
    <property type="evidence" value="ECO:0000250"/>
    <property type="project" value="UniProtKB"/>
</dbReference>
<dbReference type="GO" id="GO:0004521">
    <property type="term" value="F:RNA endonuclease activity"/>
    <property type="evidence" value="ECO:0000318"/>
    <property type="project" value="GO_Central"/>
</dbReference>
<dbReference type="GO" id="GO:0000479">
    <property type="term" value="P:endonucleolytic cleavage of tricistronic rRNA transcript (SSU-rRNA, 5.8S rRNA, LSU-rRNA)"/>
    <property type="evidence" value="ECO:0000318"/>
    <property type="project" value="GO_Central"/>
</dbReference>
<dbReference type="GO" id="GO:0042274">
    <property type="term" value="P:ribosomal small subunit biogenesis"/>
    <property type="evidence" value="ECO:0000250"/>
    <property type="project" value="UniProtKB"/>
</dbReference>
<dbReference type="CDD" id="cd00875">
    <property type="entry name" value="RNA_Cyclase_Class_I"/>
    <property type="match status" value="1"/>
</dbReference>
<dbReference type="FunFam" id="3.30.360.20:FF:000001">
    <property type="entry name" value="RNA terminal phosphate cyclase-like 1"/>
    <property type="match status" value="1"/>
</dbReference>
<dbReference type="Gene3D" id="3.65.10.20">
    <property type="entry name" value="RNA 3'-terminal phosphate cyclase domain"/>
    <property type="match status" value="1"/>
</dbReference>
<dbReference type="Gene3D" id="3.30.360.20">
    <property type="entry name" value="RNA 3'-terminal phosphate cyclase, insert domain"/>
    <property type="match status" value="1"/>
</dbReference>
<dbReference type="InterPro" id="IPR013791">
    <property type="entry name" value="RNA3'-term_phos_cycl_insert"/>
</dbReference>
<dbReference type="InterPro" id="IPR023797">
    <property type="entry name" value="RNA3'_phos_cyclase_dom"/>
</dbReference>
<dbReference type="InterPro" id="IPR037136">
    <property type="entry name" value="RNA3'_phos_cyclase_dom_sf"/>
</dbReference>
<dbReference type="InterPro" id="IPR000228">
    <property type="entry name" value="RNA3'_term_phos_cyc"/>
</dbReference>
<dbReference type="InterPro" id="IPR016443">
    <property type="entry name" value="RNA3'_term_phos_cyc_type_2"/>
</dbReference>
<dbReference type="InterPro" id="IPR020719">
    <property type="entry name" value="RNA3'_term_phos_cycl-like_CS"/>
</dbReference>
<dbReference type="InterPro" id="IPR013792">
    <property type="entry name" value="RNA3'P_cycl/enolpyr_Trfase_a/b"/>
</dbReference>
<dbReference type="InterPro" id="IPR036553">
    <property type="entry name" value="RPTC_insert"/>
</dbReference>
<dbReference type="NCBIfam" id="TIGR03400">
    <property type="entry name" value="18S_RNA_Rcl1p"/>
    <property type="match status" value="1"/>
</dbReference>
<dbReference type="PANTHER" id="PTHR11096">
    <property type="entry name" value="RNA 3' TERMINAL PHOSPHATE CYCLASE"/>
    <property type="match status" value="1"/>
</dbReference>
<dbReference type="PANTHER" id="PTHR11096:SF1">
    <property type="entry name" value="RNA 3'-TERMINAL PHOSPHATE CYCLASE-LIKE PROTEIN"/>
    <property type="match status" value="1"/>
</dbReference>
<dbReference type="Pfam" id="PF01137">
    <property type="entry name" value="RTC"/>
    <property type="match status" value="1"/>
</dbReference>
<dbReference type="Pfam" id="PF05189">
    <property type="entry name" value="RTC_insert"/>
    <property type="match status" value="1"/>
</dbReference>
<dbReference type="PIRSF" id="PIRSF005378">
    <property type="entry name" value="RNA3'_term_phos_cycl_euk"/>
    <property type="match status" value="1"/>
</dbReference>
<dbReference type="SUPFAM" id="SSF55205">
    <property type="entry name" value="EPT/RTPC-like"/>
    <property type="match status" value="1"/>
</dbReference>
<dbReference type="PROSITE" id="PS01287">
    <property type="entry name" value="RTC"/>
    <property type="match status" value="1"/>
</dbReference>
<evidence type="ECO:0000250" key="1">
    <source>
        <dbReference type="UniProtKB" id="Q08096"/>
    </source>
</evidence>
<evidence type="ECO:0000250" key="2">
    <source>
        <dbReference type="UniProtKB" id="Q9Y2P8"/>
    </source>
</evidence>
<evidence type="ECO:0000305" key="3"/>
<accession>P56175</accession>
<accession>Q95TH8</accession>
<accession>Q9VY90</accession>
<sequence>MPPIAQEGNCLIYRGSNFLKQRLILACLSGKPVKISQIRSEDETAPGLREYEISLIRLLDKITNGTKIELNPAGTSVMFSPGLLHGGQLNHDCCVQRGIGYYLDALIALGPFCKSPLQCTLRGVTNSKDSPSVDHIKGAALSLLKRFLLVDEGLELKVVRRGVAPLGGGEIIFRCPVRKSLRAIQFQSQGMVKRIRGTVYACKVSPAMANRTVEAAKGCMLKFLPDVYIYTDQNKGKMSGNSPGFGICLIAETTDGVCFAADCCSNTREESEDTPSIPENLGKEVALRLLDEIYRGGCVDSSYQWLAALYIALGQKHVSKFLTGALSNYTVHFLQHLRDFFSITFKLENPEAEDEDEAENVRGAQKVLMACVGIGYTNINKRVI</sequence>
<name>RCL1_DROME</name>
<reference key="1">
    <citation type="journal article" date="2000" name="Science">
        <title>The genome sequence of Drosophila melanogaster.</title>
        <authorList>
            <person name="Adams M.D."/>
            <person name="Celniker S.E."/>
            <person name="Holt R.A."/>
            <person name="Evans C.A."/>
            <person name="Gocayne J.D."/>
            <person name="Amanatides P.G."/>
            <person name="Scherer S.E."/>
            <person name="Li P.W."/>
            <person name="Hoskins R.A."/>
            <person name="Galle R.F."/>
            <person name="George R.A."/>
            <person name="Lewis S.E."/>
            <person name="Richards S."/>
            <person name="Ashburner M."/>
            <person name="Henderson S.N."/>
            <person name="Sutton G.G."/>
            <person name="Wortman J.R."/>
            <person name="Yandell M.D."/>
            <person name="Zhang Q."/>
            <person name="Chen L.X."/>
            <person name="Brandon R.C."/>
            <person name="Rogers Y.-H.C."/>
            <person name="Blazej R.G."/>
            <person name="Champe M."/>
            <person name="Pfeiffer B.D."/>
            <person name="Wan K.H."/>
            <person name="Doyle C."/>
            <person name="Baxter E.G."/>
            <person name="Helt G."/>
            <person name="Nelson C.R."/>
            <person name="Miklos G.L.G."/>
            <person name="Abril J.F."/>
            <person name="Agbayani A."/>
            <person name="An H.-J."/>
            <person name="Andrews-Pfannkoch C."/>
            <person name="Baldwin D."/>
            <person name="Ballew R.M."/>
            <person name="Basu A."/>
            <person name="Baxendale J."/>
            <person name="Bayraktaroglu L."/>
            <person name="Beasley E.M."/>
            <person name="Beeson K.Y."/>
            <person name="Benos P.V."/>
            <person name="Berman B.P."/>
            <person name="Bhandari D."/>
            <person name="Bolshakov S."/>
            <person name="Borkova D."/>
            <person name="Botchan M.R."/>
            <person name="Bouck J."/>
            <person name="Brokstein P."/>
            <person name="Brottier P."/>
            <person name="Burtis K.C."/>
            <person name="Busam D.A."/>
            <person name="Butler H."/>
            <person name="Cadieu E."/>
            <person name="Center A."/>
            <person name="Chandra I."/>
            <person name="Cherry J.M."/>
            <person name="Cawley S."/>
            <person name="Dahlke C."/>
            <person name="Davenport L.B."/>
            <person name="Davies P."/>
            <person name="de Pablos B."/>
            <person name="Delcher A."/>
            <person name="Deng Z."/>
            <person name="Mays A.D."/>
            <person name="Dew I."/>
            <person name="Dietz S.M."/>
            <person name="Dodson K."/>
            <person name="Doup L.E."/>
            <person name="Downes M."/>
            <person name="Dugan-Rocha S."/>
            <person name="Dunkov B.C."/>
            <person name="Dunn P."/>
            <person name="Durbin K.J."/>
            <person name="Evangelista C.C."/>
            <person name="Ferraz C."/>
            <person name="Ferriera S."/>
            <person name="Fleischmann W."/>
            <person name="Fosler C."/>
            <person name="Gabrielian A.E."/>
            <person name="Garg N.S."/>
            <person name="Gelbart W.M."/>
            <person name="Glasser K."/>
            <person name="Glodek A."/>
            <person name="Gong F."/>
            <person name="Gorrell J.H."/>
            <person name="Gu Z."/>
            <person name="Guan P."/>
            <person name="Harris M."/>
            <person name="Harris N.L."/>
            <person name="Harvey D.A."/>
            <person name="Heiman T.J."/>
            <person name="Hernandez J.R."/>
            <person name="Houck J."/>
            <person name="Hostin D."/>
            <person name="Houston K.A."/>
            <person name="Howland T.J."/>
            <person name="Wei M.-H."/>
            <person name="Ibegwam C."/>
            <person name="Jalali M."/>
            <person name="Kalush F."/>
            <person name="Karpen G.H."/>
            <person name="Ke Z."/>
            <person name="Kennison J.A."/>
            <person name="Ketchum K.A."/>
            <person name="Kimmel B.E."/>
            <person name="Kodira C.D."/>
            <person name="Kraft C.L."/>
            <person name="Kravitz S."/>
            <person name="Kulp D."/>
            <person name="Lai Z."/>
            <person name="Lasko P."/>
            <person name="Lei Y."/>
            <person name="Levitsky A.A."/>
            <person name="Li J.H."/>
            <person name="Li Z."/>
            <person name="Liang Y."/>
            <person name="Lin X."/>
            <person name="Liu X."/>
            <person name="Mattei B."/>
            <person name="McIntosh T.C."/>
            <person name="McLeod M.P."/>
            <person name="McPherson D."/>
            <person name="Merkulov G."/>
            <person name="Milshina N.V."/>
            <person name="Mobarry C."/>
            <person name="Morris J."/>
            <person name="Moshrefi A."/>
            <person name="Mount S.M."/>
            <person name="Moy M."/>
            <person name="Murphy B."/>
            <person name="Murphy L."/>
            <person name="Muzny D.M."/>
            <person name="Nelson D.L."/>
            <person name="Nelson D.R."/>
            <person name="Nelson K.A."/>
            <person name="Nixon K."/>
            <person name="Nusskern D.R."/>
            <person name="Pacleb J.M."/>
            <person name="Palazzolo M."/>
            <person name="Pittman G.S."/>
            <person name="Pan S."/>
            <person name="Pollard J."/>
            <person name="Puri V."/>
            <person name="Reese M.G."/>
            <person name="Reinert K."/>
            <person name="Remington K."/>
            <person name="Saunders R.D.C."/>
            <person name="Scheeler F."/>
            <person name="Shen H."/>
            <person name="Shue B.C."/>
            <person name="Siden-Kiamos I."/>
            <person name="Simpson M."/>
            <person name="Skupski M.P."/>
            <person name="Smith T.J."/>
            <person name="Spier E."/>
            <person name="Spradling A.C."/>
            <person name="Stapleton M."/>
            <person name="Strong R."/>
            <person name="Sun E."/>
            <person name="Svirskas R."/>
            <person name="Tector C."/>
            <person name="Turner R."/>
            <person name="Venter E."/>
            <person name="Wang A.H."/>
            <person name="Wang X."/>
            <person name="Wang Z.-Y."/>
            <person name="Wassarman D.A."/>
            <person name="Weinstock G.M."/>
            <person name="Weissenbach J."/>
            <person name="Williams S.M."/>
            <person name="Woodage T."/>
            <person name="Worley K.C."/>
            <person name="Wu D."/>
            <person name="Yang S."/>
            <person name="Yao Q.A."/>
            <person name="Ye J."/>
            <person name="Yeh R.-F."/>
            <person name="Zaveri J.S."/>
            <person name="Zhan M."/>
            <person name="Zhang G."/>
            <person name="Zhao Q."/>
            <person name="Zheng L."/>
            <person name="Zheng X.H."/>
            <person name="Zhong F.N."/>
            <person name="Zhong W."/>
            <person name="Zhou X."/>
            <person name="Zhu S.C."/>
            <person name="Zhu X."/>
            <person name="Smith H.O."/>
            <person name="Gibbs R.A."/>
            <person name="Myers E.W."/>
            <person name="Rubin G.M."/>
            <person name="Venter J.C."/>
        </authorList>
    </citation>
    <scope>NUCLEOTIDE SEQUENCE [LARGE SCALE GENOMIC DNA]</scope>
    <source>
        <strain>Berkeley</strain>
    </source>
</reference>
<reference key="2">
    <citation type="journal article" date="2002" name="Genome Biol.">
        <title>Annotation of the Drosophila melanogaster euchromatic genome: a systematic review.</title>
        <authorList>
            <person name="Misra S."/>
            <person name="Crosby M.A."/>
            <person name="Mungall C.J."/>
            <person name="Matthews B.B."/>
            <person name="Campbell K.S."/>
            <person name="Hradecky P."/>
            <person name="Huang Y."/>
            <person name="Kaminker J.S."/>
            <person name="Millburn G.H."/>
            <person name="Prochnik S.E."/>
            <person name="Smith C.D."/>
            <person name="Tupy J.L."/>
            <person name="Whitfield E.J."/>
            <person name="Bayraktaroglu L."/>
            <person name="Berman B.P."/>
            <person name="Bettencourt B.R."/>
            <person name="Celniker S.E."/>
            <person name="de Grey A.D.N.J."/>
            <person name="Drysdale R.A."/>
            <person name="Harris N.L."/>
            <person name="Richter J."/>
            <person name="Russo S."/>
            <person name="Schroeder A.J."/>
            <person name="Shu S.Q."/>
            <person name="Stapleton M."/>
            <person name="Yamada C."/>
            <person name="Ashburner M."/>
            <person name="Gelbart W.M."/>
            <person name="Rubin G.M."/>
            <person name="Lewis S.E."/>
        </authorList>
    </citation>
    <scope>GENOME REANNOTATION</scope>
    <source>
        <strain>Berkeley</strain>
    </source>
</reference>
<reference key="3">
    <citation type="journal article" date="2002" name="Genome Biol.">
        <title>A Drosophila full-length cDNA resource.</title>
        <authorList>
            <person name="Stapleton M."/>
            <person name="Carlson J.W."/>
            <person name="Brokstein P."/>
            <person name="Yu C."/>
            <person name="Champe M."/>
            <person name="George R.A."/>
            <person name="Guarin H."/>
            <person name="Kronmiller B."/>
            <person name="Pacleb J.M."/>
            <person name="Park S."/>
            <person name="Wan K.H."/>
            <person name="Rubin G.M."/>
            <person name="Celniker S.E."/>
        </authorList>
    </citation>
    <scope>NUCLEOTIDE SEQUENCE [LARGE SCALE MRNA]</scope>
    <source>
        <strain>Berkeley</strain>
        <tissue>Embryo</tissue>
    </source>
</reference>
<reference key="4">
    <citation type="journal article" date="1987" name="Nucleic Acids Res.">
        <title>Sequence homologies among the three yolk polypeptide (Yp) genes in Drosophila melanogaster.</title>
        <authorList>
            <person name="Yan Y.L."/>
            <person name="Kunert C.J."/>
            <person name="Postlethwait J.H."/>
        </authorList>
    </citation>
    <scope>NUCLEOTIDE SEQUENCE [GENOMIC DNA] OF 150-384</scope>
</reference>
<reference key="5">
    <citation type="journal article" date="1987" name="Gene">
        <title>The nucleotide sequence of the gene coding for Drosophila melanogaster yolk protein 3.</title>
        <authorList>
            <person name="Garabedian M.J."/>
            <person name="Shirras A.D."/>
            <person name="Bownes M."/>
            <person name="Wensink P.C."/>
        </authorList>
    </citation>
    <scope>NUCLEOTIDE SEQUENCE [GENOMIC DNA] OF 150-384</scope>
</reference>
<reference key="6">
    <citation type="journal article" date="1997" name="EMBO J.">
        <title>The human RNA 3'-terminal phosphate cyclase is a member of a new family of proteins conserved in Eucarya, Bacteria and Archaea.</title>
        <authorList>
            <person name="Genschik P."/>
            <person name="Billy E."/>
            <person name="Swianiewicz M."/>
            <person name="Filipowicz W."/>
        </authorList>
    </citation>
    <scope>IDENTIFICATION</scope>
</reference>
<proteinExistence type="evidence at transcript level"/>